<keyword id="KW-0002">3D-structure</keyword>
<keyword id="KW-0378">Hydrolase</keyword>
<keyword id="KW-0419">Kinetoplast</keyword>
<keyword id="KW-0496">Mitochondrion</keyword>
<keyword id="KW-0645">Protease</keyword>
<keyword id="KW-1185">Reference proteome</keyword>
<keyword id="KW-0888">Threonine protease</keyword>
<keyword id="KW-0809">Transit peptide</keyword>
<proteinExistence type="evidence at protein level"/>
<evidence type="ECO:0000250" key="1"/>
<evidence type="ECO:0000255" key="2"/>
<evidence type="ECO:0000255" key="3">
    <source>
        <dbReference type="PROSITE-ProRule" id="PRU00809"/>
    </source>
</evidence>
<evidence type="ECO:0000269" key="4">
    <source>
    </source>
</evidence>
<evidence type="ECO:0000312" key="5">
    <source>
        <dbReference type="Proteomes" id="UP000008524"/>
    </source>
</evidence>
<evidence type="ECO:0007829" key="6">
    <source>
        <dbReference type="PDB" id="4HNZ"/>
    </source>
</evidence>
<comment type="function">
    <text evidence="1 4">Protease subunit of a proteasome-like degradation complex. HslU recognizes protein substrates and unfolds these before guiding them to HslV for hydrolysis. HslV is not believed to degrade folded proteins (By similarity). The HslVU protease complex functions in mitochondrial DNA replication by regulating DNA helicase PIF2 protein levels.</text>
</comment>
<comment type="catalytic activity">
    <reaction evidence="4">
        <text>ATP-dependent cleavage of peptide bonds with broad specificity.</text>
        <dbReference type="EC" id="3.4.25.2"/>
    </reaction>
</comment>
<comment type="subunit">
    <text evidence="1">A double ring-shaped homohexamer of HslV is capped on each side by a ring-shaped HslU homohexamer. The assembly of the HslU/HslV complex (HslVU) is dependent on binding of ATP (By similarity).</text>
</comment>
<comment type="subcellular location">
    <subcellularLocation>
        <location evidence="4">Mitochondrion matrix</location>
        <location evidence="4">Kinetoplast</location>
    </subcellularLocation>
    <text>Associated with kinetoplast DNA (kDNA).</text>
</comment>
<comment type="similarity">
    <text evidence="3">Belongs to the peptidase T1B family. HslV subfamily.</text>
</comment>
<feature type="transit peptide" description="Mitochondrion" evidence="2">
    <location>
        <begin position="1"/>
        <end position="19"/>
    </location>
</feature>
<feature type="chain" id="PRO_0000423757" description="ATP-dependent protease subunit HslV">
    <location>
        <begin position="20"/>
        <end position="209"/>
    </location>
</feature>
<feature type="active site" evidence="1">
    <location>
        <position position="20"/>
    </location>
</feature>
<feature type="mutagenesis site" description="Strongly impairs peptidase activity." evidence="4">
    <original>T</original>
    <variation>A</variation>
    <location>
        <position position="20"/>
    </location>
</feature>
<feature type="mutagenesis site" description="Strongly impairs peptidase activity." evidence="4">
    <original>T</original>
    <variation>A</variation>
    <location>
        <position position="21"/>
    </location>
</feature>
<feature type="mutagenesis site" description="Strongly impairs peptidase activity." evidence="4">
    <original>K</original>
    <variation>A</variation>
    <location>
        <position position="53"/>
    </location>
</feature>
<feature type="strand" evidence="6">
    <location>
        <begin position="22"/>
        <end position="27"/>
    </location>
</feature>
<feature type="strand" evidence="6">
    <location>
        <begin position="30"/>
        <end position="36"/>
    </location>
</feature>
<feature type="strand" evidence="6">
    <location>
        <begin position="39"/>
        <end position="41"/>
    </location>
</feature>
<feature type="turn" evidence="6">
    <location>
        <begin position="42"/>
        <end position="44"/>
    </location>
</feature>
<feature type="strand" evidence="6">
    <location>
        <begin position="45"/>
        <end position="49"/>
    </location>
</feature>
<feature type="strand" evidence="6">
    <location>
        <begin position="54"/>
        <end position="58"/>
    </location>
</feature>
<feature type="strand" evidence="6">
    <location>
        <begin position="61"/>
        <end position="67"/>
    </location>
</feature>
<feature type="helix" evidence="6">
    <location>
        <begin position="69"/>
        <end position="85"/>
    </location>
</feature>
<feature type="helix" evidence="6">
    <location>
        <begin position="90"/>
        <end position="103"/>
    </location>
</feature>
<feature type="helix" evidence="6">
    <location>
        <begin position="105"/>
        <end position="108"/>
    </location>
</feature>
<feature type="strand" evidence="6">
    <location>
        <begin position="112"/>
        <end position="117"/>
    </location>
</feature>
<feature type="strand" evidence="6">
    <location>
        <begin position="122"/>
        <end position="126"/>
    </location>
</feature>
<feature type="strand" evidence="6">
    <location>
        <begin position="139"/>
        <end position="143"/>
    </location>
</feature>
<feature type="helix" evidence="6">
    <location>
        <begin position="146"/>
        <end position="156"/>
    </location>
</feature>
<feature type="helix" evidence="6">
    <location>
        <begin position="164"/>
        <end position="178"/>
    </location>
</feature>
<feature type="strand" evidence="6">
    <location>
        <begin position="186"/>
        <end position="191"/>
    </location>
</feature>
<reference key="1">
    <citation type="journal article" date="2005" name="Science">
        <title>The genome of the African trypanosome Trypanosoma brucei.</title>
        <authorList>
            <person name="Berriman M."/>
            <person name="Ghedin E."/>
            <person name="Hertz-Fowler C."/>
            <person name="Blandin G."/>
            <person name="Renauld H."/>
            <person name="Bartholomeu D.C."/>
            <person name="Lennard N.J."/>
            <person name="Caler E."/>
            <person name="Hamlin N.E."/>
            <person name="Haas B."/>
            <person name="Bohme U."/>
            <person name="Hannick L."/>
            <person name="Aslett M.A."/>
            <person name="Shallom J."/>
            <person name="Marcello L."/>
            <person name="Hou L."/>
            <person name="Wickstead B."/>
            <person name="Alsmark U.C.M."/>
            <person name="Arrowsmith C."/>
            <person name="Atkin R.J."/>
            <person name="Barron A.J."/>
            <person name="Bringaud F."/>
            <person name="Brooks K."/>
            <person name="Carrington M."/>
            <person name="Cherevach I."/>
            <person name="Chillingworth T.J."/>
            <person name="Churcher C."/>
            <person name="Clark L.N."/>
            <person name="Corton C.H."/>
            <person name="Cronin A."/>
            <person name="Davies R.M."/>
            <person name="Doggett J."/>
            <person name="Djikeng A."/>
            <person name="Feldblyum T."/>
            <person name="Field M.C."/>
            <person name="Fraser A."/>
            <person name="Goodhead I."/>
            <person name="Hance Z."/>
            <person name="Harper D."/>
            <person name="Harris B.R."/>
            <person name="Hauser H."/>
            <person name="Hostetler J."/>
            <person name="Ivens A."/>
            <person name="Jagels K."/>
            <person name="Johnson D."/>
            <person name="Johnson J."/>
            <person name="Jones K."/>
            <person name="Kerhornou A.X."/>
            <person name="Koo H."/>
            <person name="Larke N."/>
            <person name="Landfear S."/>
            <person name="Larkin C."/>
            <person name="Leech V."/>
            <person name="Line A."/>
            <person name="Lord A."/>
            <person name="Macleod A."/>
            <person name="Mooney P.J."/>
            <person name="Moule S."/>
            <person name="Martin D.M."/>
            <person name="Morgan G.W."/>
            <person name="Mungall K."/>
            <person name="Norbertczak H."/>
            <person name="Ormond D."/>
            <person name="Pai G."/>
            <person name="Peacock C.S."/>
            <person name="Peterson J."/>
            <person name="Quail M.A."/>
            <person name="Rabbinowitsch E."/>
            <person name="Rajandream M.A."/>
            <person name="Reitter C."/>
            <person name="Salzberg S.L."/>
            <person name="Sanders M."/>
            <person name="Schobel S."/>
            <person name="Sharp S."/>
            <person name="Simmonds M."/>
            <person name="Simpson A.J."/>
            <person name="Tallon L."/>
            <person name="Turner C.M."/>
            <person name="Tait A."/>
            <person name="Tivey A.R."/>
            <person name="Van Aken S."/>
            <person name="Walker D."/>
            <person name="Wanless D."/>
            <person name="Wang S."/>
            <person name="White B."/>
            <person name="White O."/>
            <person name="Whitehead S."/>
            <person name="Woodward J."/>
            <person name="Wortman J."/>
            <person name="Adams M.D."/>
            <person name="Embley T.M."/>
            <person name="Gull K."/>
            <person name="Ullu E."/>
            <person name="Barry J.D."/>
            <person name="Fairlamb A.H."/>
            <person name="Opperdoes F."/>
            <person name="Barrell B.G."/>
            <person name="Donelson J.E."/>
            <person name="Hall N."/>
            <person name="Fraser C.M."/>
            <person name="Melville S.E."/>
            <person name="El-Sayed N.M.A."/>
        </authorList>
    </citation>
    <scope>NUCLEOTIDE SEQUENCE [LARGE SCALE GENOMIC DNA]</scope>
    <source>
        <strain evidence="5">927/4 GUTat10.1</strain>
    </source>
</reference>
<reference key="2">
    <citation type="journal article" date="2008" name="PLoS Pathog.">
        <title>Identification of a bacterial-like HslVU protease in the mitochondria of Trypanosoma brucei and its role in mitochondrial DNA replication.</title>
        <authorList>
            <person name="Li Z."/>
            <person name="Lindsay M.E."/>
            <person name="Motyka S.A."/>
            <person name="Englund P.T."/>
            <person name="Wang C.C."/>
        </authorList>
    </citation>
    <scope>FUNCTION</scope>
    <scope>CATALYTIC ACTIVITY</scope>
    <scope>SUBCELLULAR LOCATION</scope>
    <scope>MUTAGENESIS OF THR-20; THR-21 AND LYS-53</scope>
</reference>
<dbReference type="EC" id="3.4.25.2"/>
<dbReference type="EMBL" id="CH464491">
    <property type="protein sequence ID" value="EAN79976.1"/>
    <property type="molecule type" value="Genomic_DNA"/>
</dbReference>
<dbReference type="RefSeq" id="XP_829088.1">
    <property type="nucleotide sequence ID" value="XM_823995.1"/>
</dbReference>
<dbReference type="PDB" id="4HNZ">
    <property type="method" value="X-ray"/>
    <property type="resolution" value="2.39 A"/>
    <property type="chains" value="A/B/C/D/E/F/G/H/I/J/K/L=20-191"/>
</dbReference>
<dbReference type="PDB" id="4HO7">
    <property type="method" value="X-ray"/>
    <property type="resolution" value="2.60 A"/>
    <property type="chains" value="A/B/C=20-191"/>
</dbReference>
<dbReference type="PDBsum" id="4HNZ"/>
<dbReference type="PDBsum" id="4HO7"/>
<dbReference type="SMR" id="Q383Q5"/>
<dbReference type="STRING" id="185431.Q383Q5"/>
<dbReference type="MEROPS" id="T01.021"/>
<dbReference type="PaxDb" id="5691-EAN79976"/>
<dbReference type="GeneID" id="3664228"/>
<dbReference type="KEGG" id="tbr:Tb11.01.2000"/>
<dbReference type="VEuPathDB" id="TriTrypDB:Tb927.11.10240"/>
<dbReference type="eggNOG" id="ENOG502RS9W">
    <property type="taxonomic scope" value="Eukaryota"/>
</dbReference>
<dbReference type="InParanoid" id="Q383Q5"/>
<dbReference type="OrthoDB" id="276825at2759"/>
<dbReference type="BRENDA" id="3.4.25.2">
    <property type="organism ID" value="6519"/>
</dbReference>
<dbReference type="EvolutionaryTrace" id="Q383Q5"/>
<dbReference type="Proteomes" id="UP000008524">
    <property type="component" value="Chromosome 11 Scaffold 1"/>
</dbReference>
<dbReference type="GO" id="GO:0097014">
    <property type="term" value="C:ciliary plasm"/>
    <property type="evidence" value="ECO:0000314"/>
    <property type="project" value="GeneDB"/>
</dbReference>
<dbReference type="GO" id="GO:0005737">
    <property type="term" value="C:cytoplasm"/>
    <property type="evidence" value="ECO:0000314"/>
    <property type="project" value="GeneDB"/>
</dbReference>
<dbReference type="GO" id="GO:0009376">
    <property type="term" value="C:HslUV protease complex"/>
    <property type="evidence" value="ECO:0000314"/>
    <property type="project" value="GeneDB"/>
</dbReference>
<dbReference type="GO" id="GO:0020023">
    <property type="term" value="C:kinetoplast"/>
    <property type="evidence" value="ECO:0007669"/>
    <property type="project" value="UniProtKB-SubCell"/>
</dbReference>
<dbReference type="GO" id="GO:0042645">
    <property type="term" value="C:mitochondrial nucleoid"/>
    <property type="evidence" value="ECO:0000314"/>
    <property type="project" value="GeneDB"/>
</dbReference>
<dbReference type="GO" id="GO:0005739">
    <property type="term" value="C:mitochondrion"/>
    <property type="evidence" value="ECO:0000314"/>
    <property type="project" value="GeneDB"/>
</dbReference>
<dbReference type="GO" id="GO:0031981">
    <property type="term" value="C:nuclear lumen"/>
    <property type="evidence" value="ECO:0000314"/>
    <property type="project" value="GeneDB"/>
</dbReference>
<dbReference type="GO" id="GO:0005839">
    <property type="term" value="C:proteasome core complex"/>
    <property type="evidence" value="ECO:0007669"/>
    <property type="project" value="InterPro"/>
</dbReference>
<dbReference type="GO" id="GO:0004176">
    <property type="term" value="F:ATP-dependent peptidase activity"/>
    <property type="evidence" value="ECO:0000314"/>
    <property type="project" value="GeneDB"/>
</dbReference>
<dbReference type="GO" id="GO:0004175">
    <property type="term" value="F:endopeptidase activity"/>
    <property type="evidence" value="ECO:0000255"/>
    <property type="project" value="GeneDB"/>
</dbReference>
<dbReference type="GO" id="GO:0004298">
    <property type="term" value="F:threonine-type endopeptidase activity"/>
    <property type="evidence" value="ECO:0007669"/>
    <property type="project" value="UniProtKB-KW"/>
</dbReference>
<dbReference type="GO" id="GO:0006264">
    <property type="term" value="P:mitochondrial DNA replication"/>
    <property type="evidence" value="ECO:0000315"/>
    <property type="project" value="GeneDB"/>
</dbReference>
<dbReference type="GO" id="GO:0051603">
    <property type="term" value="P:proteolysis involved in protein catabolic process"/>
    <property type="evidence" value="ECO:0000318"/>
    <property type="project" value="GO_Central"/>
</dbReference>
<dbReference type="GO" id="GO:0070581">
    <property type="term" value="P:rolling circle DNA replication"/>
    <property type="evidence" value="ECO:0000314"/>
    <property type="project" value="GeneDB"/>
</dbReference>
<dbReference type="FunFam" id="3.60.20.10:FF:000002">
    <property type="entry name" value="ATP-dependent protease subunit HslV"/>
    <property type="match status" value="1"/>
</dbReference>
<dbReference type="Gene3D" id="3.60.20.10">
    <property type="entry name" value="Glutamine Phosphoribosylpyrophosphate, subunit 1, domain 1"/>
    <property type="match status" value="1"/>
</dbReference>
<dbReference type="InterPro" id="IPR022281">
    <property type="entry name" value="ATP-dep_Prtase_HsIV_su"/>
</dbReference>
<dbReference type="InterPro" id="IPR029055">
    <property type="entry name" value="Ntn_hydrolases_N"/>
</dbReference>
<dbReference type="InterPro" id="IPR001353">
    <property type="entry name" value="Proteasome_sua/b"/>
</dbReference>
<dbReference type="InterPro" id="IPR023333">
    <property type="entry name" value="Proteasome_suB-type"/>
</dbReference>
<dbReference type="NCBIfam" id="TIGR03692">
    <property type="entry name" value="ATP_dep_HslV"/>
    <property type="match status" value="1"/>
</dbReference>
<dbReference type="NCBIfam" id="NF003964">
    <property type="entry name" value="PRK05456.1"/>
    <property type="match status" value="1"/>
</dbReference>
<dbReference type="PANTHER" id="PTHR32194:SF7">
    <property type="entry name" value="ATP-DEPENDENT PROTEASE SUBUNIT HSLV"/>
    <property type="match status" value="1"/>
</dbReference>
<dbReference type="PANTHER" id="PTHR32194">
    <property type="entry name" value="METALLOPROTEASE TLDD"/>
    <property type="match status" value="1"/>
</dbReference>
<dbReference type="Pfam" id="PF00227">
    <property type="entry name" value="Proteasome"/>
    <property type="match status" value="1"/>
</dbReference>
<dbReference type="SUPFAM" id="SSF56235">
    <property type="entry name" value="N-terminal nucleophile aminohydrolases (Ntn hydrolases)"/>
    <property type="match status" value="1"/>
</dbReference>
<dbReference type="PROSITE" id="PS51476">
    <property type="entry name" value="PROTEASOME_BETA_2"/>
    <property type="match status" value="1"/>
</dbReference>
<sequence>MLRRVGRTTCSPAACQLRHTTILSVRKGDTVVLLGDRQVTLGERIVAKSSACKLRRINDDVVIGFAGSTADAISLMEKLENKIGEFPNQLTRAAVELAKEWRTDRALRRLEASLIVCSAEETLEIDGQGNVITPEADGIVAIGSGGTFAKAAARALIDVDGYDAEKIARKAMRIATDIDVFSNEHWDVEVLKRKSEKQEGSEASAKTSE</sequence>
<organism>
    <name type="scientific">Trypanosoma brucei brucei (strain 927/4 GUTat10.1)</name>
    <dbReference type="NCBI Taxonomy" id="185431"/>
    <lineage>
        <taxon>Eukaryota</taxon>
        <taxon>Discoba</taxon>
        <taxon>Euglenozoa</taxon>
        <taxon>Kinetoplastea</taxon>
        <taxon>Metakinetoplastina</taxon>
        <taxon>Trypanosomatida</taxon>
        <taxon>Trypanosomatidae</taxon>
        <taxon>Trypanosoma</taxon>
    </lineage>
</organism>
<accession>Q383Q5</accession>
<gene>
    <name type="primary">HslV</name>
    <name type="ORF">Tb11.01.2000</name>
</gene>
<protein>
    <recommendedName>
        <fullName>ATP-dependent protease subunit HslV</fullName>
        <ecNumber>3.4.25.2</ecNumber>
    </recommendedName>
    <alternativeName>
        <fullName>Mitochondrial proteasome-like protease HslVU protease subunit</fullName>
    </alternativeName>
</protein>
<name>HSLV_TRYB2</name>